<keyword id="KW-0030">Aminoacyl-tRNA synthetase</keyword>
<keyword id="KW-0067">ATP-binding</keyword>
<keyword id="KW-0963">Cytoplasm</keyword>
<keyword id="KW-0436">Ligase</keyword>
<keyword id="KW-0547">Nucleotide-binding</keyword>
<keyword id="KW-0648">Protein biosynthesis</keyword>
<keyword id="KW-1185">Reference proteome</keyword>
<name>SYL_OCEIH</name>
<feature type="chain" id="PRO_0000152057" description="Leucine--tRNA ligase">
    <location>
        <begin position="1"/>
        <end position="804"/>
    </location>
</feature>
<feature type="short sequence motif" description="'HIGH' region">
    <location>
        <begin position="40"/>
        <end position="51"/>
    </location>
</feature>
<feature type="short sequence motif" description="'KMSKS' region">
    <location>
        <begin position="576"/>
        <end position="580"/>
    </location>
</feature>
<feature type="binding site" evidence="1">
    <location>
        <position position="579"/>
    </location>
    <ligand>
        <name>ATP</name>
        <dbReference type="ChEBI" id="CHEBI:30616"/>
    </ligand>
</feature>
<dbReference type="EC" id="6.1.1.4" evidence="1"/>
<dbReference type="EMBL" id="BA000028">
    <property type="protein sequence ID" value="BAC14263.1"/>
    <property type="molecule type" value="Genomic_DNA"/>
</dbReference>
<dbReference type="RefSeq" id="WP_011066700.1">
    <property type="nucleotide sequence ID" value="NC_004193.1"/>
</dbReference>
<dbReference type="SMR" id="Q8EP12"/>
<dbReference type="STRING" id="221109.gene:10734558"/>
<dbReference type="KEGG" id="oih:OB2307"/>
<dbReference type="eggNOG" id="COG0495">
    <property type="taxonomic scope" value="Bacteria"/>
</dbReference>
<dbReference type="HOGENOM" id="CLU_004427_0_0_9"/>
<dbReference type="OrthoDB" id="9810365at2"/>
<dbReference type="PhylomeDB" id="Q8EP12"/>
<dbReference type="Proteomes" id="UP000000822">
    <property type="component" value="Chromosome"/>
</dbReference>
<dbReference type="GO" id="GO:0005829">
    <property type="term" value="C:cytosol"/>
    <property type="evidence" value="ECO:0007669"/>
    <property type="project" value="TreeGrafter"/>
</dbReference>
<dbReference type="GO" id="GO:0002161">
    <property type="term" value="F:aminoacyl-tRNA deacylase activity"/>
    <property type="evidence" value="ECO:0007669"/>
    <property type="project" value="InterPro"/>
</dbReference>
<dbReference type="GO" id="GO:0005524">
    <property type="term" value="F:ATP binding"/>
    <property type="evidence" value="ECO:0007669"/>
    <property type="project" value="UniProtKB-UniRule"/>
</dbReference>
<dbReference type="GO" id="GO:0004823">
    <property type="term" value="F:leucine-tRNA ligase activity"/>
    <property type="evidence" value="ECO:0007669"/>
    <property type="project" value="UniProtKB-UniRule"/>
</dbReference>
<dbReference type="GO" id="GO:0006429">
    <property type="term" value="P:leucyl-tRNA aminoacylation"/>
    <property type="evidence" value="ECO:0007669"/>
    <property type="project" value="UniProtKB-UniRule"/>
</dbReference>
<dbReference type="CDD" id="cd07958">
    <property type="entry name" value="Anticodon_Ia_Leu_BEm"/>
    <property type="match status" value="1"/>
</dbReference>
<dbReference type="CDD" id="cd00812">
    <property type="entry name" value="LeuRS_core"/>
    <property type="match status" value="1"/>
</dbReference>
<dbReference type="FunFam" id="3.10.20.590:FF:000001">
    <property type="entry name" value="Leucine--tRNA ligase"/>
    <property type="match status" value="1"/>
</dbReference>
<dbReference type="FunFam" id="3.40.50.620:FF:000056">
    <property type="entry name" value="Leucine--tRNA ligase"/>
    <property type="match status" value="1"/>
</dbReference>
<dbReference type="FunFam" id="3.40.50.620:FF:000077">
    <property type="entry name" value="Leucine--tRNA ligase"/>
    <property type="match status" value="1"/>
</dbReference>
<dbReference type="FunFam" id="3.90.740.10:FF:000017">
    <property type="entry name" value="Leucine--tRNA ligase"/>
    <property type="match status" value="1"/>
</dbReference>
<dbReference type="FunFam" id="1.10.730.10:FF:000011">
    <property type="entry name" value="Leucine--tRNA ligase chloroplastic/mitochondrial"/>
    <property type="match status" value="1"/>
</dbReference>
<dbReference type="Gene3D" id="3.10.20.590">
    <property type="match status" value="1"/>
</dbReference>
<dbReference type="Gene3D" id="3.40.50.620">
    <property type="entry name" value="HUPs"/>
    <property type="match status" value="2"/>
</dbReference>
<dbReference type="Gene3D" id="1.10.730.10">
    <property type="entry name" value="Isoleucyl-tRNA Synthetase, Domain 1"/>
    <property type="match status" value="1"/>
</dbReference>
<dbReference type="HAMAP" id="MF_00049_B">
    <property type="entry name" value="Leu_tRNA_synth_B"/>
    <property type="match status" value="1"/>
</dbReference>
<dbReference type="InterPro" id="IPR001412">
    <property type="entry name" value="aa-tRNA-synth_I_CS"/>
</dbReference>
<dbReference type="InterPro" id="IPR002300">
    <property type="entry name" value="aa-tRNA-synth_Ia"/>
</dbReference>
<dbReference type="InterPro" id="IPR002302">
    <property type="entry name" value="Leu-tRNA-ligase"/>
</dbReference>
<dbReference type="InterPro" id="IPR025709">
    <property type="entry name" value="Leu_tRNA-synth_edit"/>
</dbReference>
<dbReference type="InterPro" id="IPR013155">
    <property type="entry name" value="M/V/L/I-tRNA-synth_anticd-bd"/>
</dbReference>
<dbReference type="InterPro" id="IPR015413">
    <property type="entry name" value="Methionyl/Leucyl_tRNA_Synth"/>
</dbReference>
<dbReference type="InterPro" id="IPR014729">
    <property type="entry name" value="Rossmann-like_a/b/a_fold"/>
</dbReference>
<dbReference type="InterPro" id="IPR009080">
    <property type="entry name" value="tRNAsynth_Ia_anticodon-bd"/>
</dbReference>
<dbReference type="InterPro" id="IPR009008">
    <property type="entry name" value="Val/Leu/Ile-tRNA-synth_edit"/>
</dbReference>
<dbReference type="NCBIfam" id="TIGR00396">
    <property type="entry name" value="leuS_bact"/>
    <property type="match status" value="1"/>
</dbReference>
<dbReference type="PANTHER" id="PTHR43740:SF2">
    <property type="entry name" value="LEUCINE--TRNA LIGASE, MITOCHONDRIAL"/>
    <property type="match status" value="1"/>
</dbReference>
<dbReference type="PANTHER" id="PTHR43740">
    <property type="entry name" value="LEUCYL-TRNA SYNTHETASE"/>
    <property type="match status" value="1"/>
</dbReference>
<dbReference type="Pfam" id="PF08264">
    <property type="entry name" value="Anticodon_1"/>
    <property type="match status" value="1"/>
</dbReference>
<dbReference type="Pfam" id="PF00133">
    <property type="entry name" value="tRNA-synt_1"/>
    <property type="match status" value="1"/>
</dbReference>
<dbReference type="Pfam" id="PF13603">
    <property type="entry name" value="tRNA-synt_1_2"/>
    <property type="match status" value="1"/>
</dbReference>
<dbReference type="Pfam" id="PF09334">
    <property type="entry name" value="tRNA-synt_1g"/>
    <property type="match status" value="1"/>
</dbReference>
<dbReference type="PRINTS" id="PR00985">
    <property type="entry name" value="TRNASYNTHLEU"/>
</dbReference>
<dbReference type="SUPFAM" id="SSF47323">
    <property type="entry name" value="Anticodon-binding domain of a subclass of class I aminoacyl-tRNA synthetases"/>
    <property type="match status" value="1"/>
</dbReference>
<dbReference type="SUPFAM" id="SSF52374">
    <property type="entry name" value="Nucleotidylyl transferase"/>
    <property type="match status" value="1"/>
</dbReference>
<dbReference type="SUPFAM" id="SSF50677">
    <property type="entry name" value="ValRS/IleRS/LeuRS editing domain"/>
    <property type="match status" value="1"/>
</dbReference>
<dbReference type="PROSITE" id="PS00178">
    <property type="entry name" value="AA_TRNA_LIGASE_I"/>
    <property type="match status" value="1"/>
</dbReference>
<sequence>MSFQHRQIEKKWQDYWEDNKTFKTDTFSNKEKFYALDMFPYPSGQGLHVGHPEGYTATDILARMKRMQGYEVMHPMGWDAFGLPAEQYAIDTGNSPAEFTNQNINTFKRQIKELGFSYDWDREINTTDPNYYKWTQWIFKKLYENDLAYMDEVAVNWCPALGTVLANEEVIDGKSERGGHPVIRKPMKQWMLKITAYADRLLEDLNELDWPDSLKEMQRNWIGRSEGAEVTFSIKGNEGTFTVFTTRPDTLFGATYAVVAPEHPLVKEITTLSQKEAVQNYLDEIQTKSDLERTDLAKDKTGVFTGAYAINPVNGEEMPIWVADYVLMSYGTGAIMAVPAHDERDYEFANTFGLPIKEVVAGGNIDDEAYTGDGEHVNSEFLNGLGKEEAITKMIDWLEANGSGEKKITYRLRDWLFARQRYWGEPIPIIHWEDGTMTAVPDEDLPLTLPQVAEIKPSGTGESPLANNTDWVNVVDPETGLKGRRETNTMPQWAGSCWYFLRYIDPNNTERLADPKALEEWLPIDIYIGGAEHAVLHLLYARFWHKFLFDIGVVSTKEPFQKLYNQGMILGEGNEKMSKSKGNVVNPDDIIDSHGADTLRLYEMFMGPLDASVAWSTNGLDGSRRFLDRVWRLYVGDDGSLTDKIIDDESTELDKIYHETVKKVTDDFEHMHFNTGISQMMVFINECYKANKIPKIYAEGFVKLLSPVAPHLSEEIWQKLGHSESISKATWPAYDESKLVEDEVEVVLQIMGKVRSKIQVPVDISKDDLEKAALDDESMQKWLEGKTIRKVIVVPGKLVNIVAN</sequence>
<accession>Q8EP12</accession>
<evidence type="ECO:0000255" key="1">
    <source>
        <dbReference type="HAMAP-Rule" id="MF_00049"/>
    </source>
</evidence>
<gene>
    <name evidence="1" type="primary">leuS</name>
    <name type="ordered locus">OB2307</name>
</gene>
<comment type="catalytic activity">
    <reaction evidence="1">
        <text>tRNA(Leu) + L-leucine + ATP = L-leucyl-tRNA(Leu) + AMP + diphosphate</text>
        <dbReference type="Rhea" id="RHEA:11688"/>
        <dbReference type="Rhea" id="RHEA-COMP:9613"/>
        <dbReference type="Rhea" id="RHEA-COMP:9622"/>
        <dbReference type="ChEBI" id="CHEBI:30616"/>
        <dbReference type="ChEBI" id="CHEBI:33019"/>
        <dbReference type="ChEBI" id="CHEBI:57427"/>
        <dbReference type="ChEBI" id="CHEBI:78442"/>
        <dbReference type="ChEBI" id="CHEBI:78494"/>
        <dbReference type="ChEBI" id="CHEBI:456215"/>
        <dbReference type="EC" id="6.1.1.4"/>
    </reaction>
</comment>
<comment type="subcellular location">
    <subcellularLocation>
        <location evidence="1">Cytoplasm</location>
    </subcellularLocation>
</comment>
<comment type="similarity">
    <text evidence="1">Belongs to the class-I aminoacyl-tRNA synthetase family.</text>
</comment>
<proteinExistence type="inferred from homology"/>
<organism>
    <name type="scientific">Oceanobacillus iheyensis (strain DSM 14371 / CIP 107618 / JCM 11309 / KCTC 3954 / HTE831)</name>
    <dbReference type="NCBI Taxonomy" id="221109"/>
    <lineage>
        <taxon>Bacteria</taxon>
        <taxon>Bacillati</taxon>
        <taxon>Bacillota</taxon>
        <taxon>Bacilli</taxon>
        <taxon>Bacillales</taxon>
        <taxon>Bacillaceae</taxon>
        <taxon>Oceanobacillus</taxon>
    </lineage>
</organism>
<protein>
    <recommendedName>
        <fullName evidence="1">Leucine--tRNA ligase</fullName>
        <ecNumber evidence="1">6.1.1.4</ecNumber>
    </recommendedName>
    <alternativeName>
        <fullName evidence="1">Leucyl-tRNA synthetase</fullName>
        <shortName evidence="1">LeuRS</shortName>
    </alternativeName>
</protein>
<reference key="1">
    <citation type="journal article" date="2002" name="Nucleic Acids Res.">
        <title>Genome sequence of Oceanobacillus iheyensis isolated from the Iheya Ridge and its unexpected adaptive capabilities to extreme environments.</title>
        <authorList>
            <person name="Takami H."/>
            <person name="Takaki Y."/>
            <person name="Uchiyama I."/>
        </authorList>
    </citation>
    <scope>NUCLEOTIDE SEQUENCE [LARGE SCALE GENOMIC DNA]</scope>
    <source>
        <strain>DSM 14371 / CIP 107618 / JCM 11309 / KCTC 3954 / HTE831</strain>
    </source>
</reference>